<organism>
    <name type="scientific">Vaccinia virus (strain Western Reserve)</name>
    <name type="common">VACV</name>
    <name type="synonym">Vaccinia virus (strain WR)</name>
    <dbReference type="NCBI Taxonomy" id="10254"/>
    <lineage>
        <taxon>Viruses</taxon>
        <taxon>Varidnaviria</taxon>
        <taxon>Bamfordvirae</taxon>
        <taxon>Nucleocytoviricota</taxon>
        <taxon>Pokkesviricetes</taxon>
        <taxon>Chitovirales</taxon>
        <taxon>Poxviridae</taxon>
        <taxon>Chordopoxvirinae</taxon>
        <taxon>Orthopoxvirus</taxon>
        <taxon>Vaccinia virus</taxon>
    </lineage>
</organism>
<keyword id="KW-0426">Late protein</keyword>
<keyword id="KW-1185">Reference proteome</keyword>
<keyword id="KW-0946">Virion</keyword>
<protein>
    <recommendedName>
        <fullName>Core protein OPG114</fullName>
    </recommendedName>
</protein>
<feature type="chain" id="PRO_0000099424" description="Core protein OPG114">
    <location>
        <begin position="1"/>
        <end position="146"/>
    </location>
</feature>
<sequence>MSINIDIKKITDLLNSSILFPDDVQELLREKYIVLERKSNGTPTVAHIYKTMARFDNKSIYRIAKFLFMNRPDVIKLLFLKDVEPLLPDKSINISINNTEYPQLEGPIGTKIALLELFNAFRTGRSEPIPYYYLPLRKDINNIVTK</sequence>
<accession>P04300</accession>
<accession>Q76ZS5</accession>
<comment type="function">
    <text evidence="1">Late protein which is part of a large complex required for early virion morphogenesis. This complex participates in the formation of virosomes and the incorporation of virosomal contents into nascent immature virions.</text>
</comment>
<comment type="subunit">
    <text evidence="1">Part of a complex composed of the kinase OPG054, OPG092, OPG100, OPG114, OPG115, OPG142 and OPG157.</text>
</comment>
<comment type="subcellular location">
    <subcellularLocation>
        <location evidence="2">Virion</location>
    </subcellularLocation>
    <text>Localizes to the virion core.</text>
</comment>
<comment type="induction">
    <text evidence="2">Expressed in the late phase of the viral replicative cycle.</text>
</comment>
<comment type="similarity">
    <text evidence="3">Belongs to the orthopoxvirus OPG114 family.</text>
</comment>
<organismHost>
    <name type="scientific">Bos taurus</name>
    <name type="common">Bovine</name>
    <dbReference type="NCBI Taxonomy" id="9913"/>
</organismHost>
<name>PG114_VACCW</name>
<reference key="1">
    <citation type="journal article" date="1986" name="Virology">
        <title>Nucleotide sequence and genetic map of the 16-kb vaccinia virus HindIII D fragment.</title>
        <authorList>
            <person name="Niles E.G."/>
            <person name="Condit R.C."/>
            <person name="Caro P."/>
            <person name="Davidson K."/>
            <person name="Matusick L."/>
            <person name="Seto J."/>
        </authorList>
    </citation>
    <scope>NUCLEOTIDE SEQUENCE [GENOMIC DNA]</scope>
</reference>
<reference key="2">
    <citation type="submission" date="2003-02" db="EMBL/GenBank/DDBJ databases">
        <title>Sequencing of the coding region of Vaccinia-WR to an average 9-fold redundancy and an error rate of 0.16/10kb.</title>
        <authorList>
            <person name="Esposito J.J."/>
            <person name="Frace A.M."/>
            <person name="Sammons S.A."/>
            <person name="Olsen-Rasmussen M."/>
            <person name="Osborne J."/>
            <person name="Wohlhueter R."/>
        </authorList>
    </citation>
    <scope>NUCLEOTIDE SEQUENCE [LARGE SCALE GENOMIC DNA]</scope>
</reference>
<reference key="3">
    <citation type="journal article" date="1991" name="Virology">
        <title>Genetic and biochemical characterization of vaccinia virus genes D2L and D3R which encode virion structural proteins.</title>
        <authorList>
            <person name="Dyster L.M."/>
            <person name="Niles E.G."/>
        </authorList>
    </citation>
    <scope>INDUCTION</scope>
    <scope>SUBCELLULAR LOCATION</scope>
</reference>
<reference key="4">
    <citation type="journal article" date="2004" name="Virology">
        <title>A complex of seven vaccinia virus proteins conserved in all chordopoxviruses is required for the association of membranes and viroplasm to form immature virions.</title>
        <authorList>
            <person name="Szajner P."/>
            <person name="Jaffe H."/>
            <person name="Weisberg A.S."/>
            <person name="Moss B."/>
        </authorList>
    </citation>
    <scope>IDENTIFICATION IN COMPLEX WITH OPG054; OPG092; OPG100; OPG115; OPG142 AND OPG157</scope>
    <scope>FUNCTION</scope>
</reference>
<proteinExistence type="evidence at transcript level"/>
<dbReference type="EMBL" id="M15058">
    <property type="protein sequence ID" value="AAA48255.1"/>
    <property type="molecule type" value="Genomic_DNA"/>
</dbReference>
<dbReference type="EMBL" id="AY243312">
    <property type="protein sequence ID" value="AAO89386.1"/>
    <property type="molecule type" value="Genomic_DNA"/>
</dbReference>
<dbReference type="PIR" id="A03874">
    <property type="entry name" value="QQVZ3"/>
</dbReference>
<dbReference type="RefSeq" id="YP_232989.1">
    <property type="nucleotide sequence ID" value="NC_006998.1"/>
</dbReference>
<dbReference type="DNASU" id="3707563"/>
<dbReference type="GeneID" id="3707563"/>
<dbReference type="KEGG" id="vg:3707563"/>
<dbReference type="Proteomes" id="UP000000344">
    <property type="component" value="Genome"/>
</dbReference>
<dbReference type="GO" id="GO:0044423">
    <property type="term" value="C:virion component"/>
    <property type="evidence" value="ECO:0007669"/>
    <property type="project" value="UniProtKB-KW"/>
</dbReference>
<dbReference type="InterPro" id="IPR006791">
    <property type="entry name" value="Pox_D2"/>
</dbReference>
<dbReference type="Pfam" id="PF04701">
    <property type="entry name" value="Pox_D2"/>
    <property type="match status" value="1"/>
</dbReference>
<gene>
    <name type="primary">OPG114</name>
    <name type="ordered locus">VACWR107</name>
    <name type="ORF">D2L</name>
</gene>
<evidence type="ECO:0000269" key="1">
    <source>
    </source>
</evidence>
<evidence type="ECO:0000269" key="2">
    <source>
    </source>
</evidence>
<evidence type="ECO:0000305" key="3"/>